<keyword id="KW-1185">Reference proteome</keyword>
<keyword id="KW-0808">Transferase</keyword>
<name>SIAS_DROME</name>
<accession>Q9VG74</accession>
<accession>B3DMY1</accession>
<accession>Q95VY1</accession>
<protein>
    <recommendedName>
        <fullName evidence="4">N-acetylneuraminate-9-phosphate synthase</fullName>
        <ecNumber evidence="2">2.5.1.57</ecNumber>
    </recommendedName>
    <alternativeName>
        <fullName>3-deoxy-D-glycero-D-galacto-nononate 9-phosphate synthase</fullName>
        <ecNumber evidence="2">2.5.1.132</ecNumber>
    </alternativeName>
    <alternativeName>
        <fullName evidence="4">Sialic acid synthase</fullName>
    </alternativeName>
</protein>
<dbReference type="EC" id="2.5.1.57" evidence="2"/>
<dbReference type="EC" id="2.5.1.132" evidence="2"/>
<dbReference type="EMBL" id="AF397531">
    <property type="protein sequence ID" value="AAK92125.1"/>
    <property type="molecule type" value="mRNA"/>
</dbReference>
<dbReference type="EMBL" id="AE014297">
    <property type="protein sequence ID" value="AAF54811.2"/>
    <property type="molecule type" value="Genomic_DNA"/>
</dbReference>
<dbReference type="EMBL" id="BT032769">
    <property type="protein sequence ID" value="ACD81783.1"/>
    <property type="status" value="ALT_INIT"/>
    <property type="molecule type" value="mRNA"/>
</dbReference>
<dbReference type="RefSeq" id="NP_650195.1">
    <property type="nucleotide sequence ID" value="NM_141938.1"/>
</dbReference>
<dbReference type="SMR" id="Q9VG74"/>
<dbReference type="FunCoup" id="Q9VG74">
    <property type="interactions" value="911"/>
</dbReference>
<dbReference type="IntAct" id="Q9VG74">
    <property type="interactions" value="1"/>
</dbReference>
<dbReference type="STRING" id="7227.FBpp0082060"/>
<dbReference type="PaxDb" id="7227-FBpp0082060"/>
<dbReference type="EnsemblMetazoa" id="FBtr0082588">
    <property type="protein sequence ID" value="FBpp0082060"/>
    <property type="gene ID" value="FBgn0038045"/>
</dbReference>
<dbReference type="GeneID" id="41528"/>
<dbReference type="KEGG" id="dme:Dmel_CG5232"/>
<dbReference type="UCSC" id="CG5232-RA">
    <property type="organism name" value="d. melanogaster"/>
</dbReference>
<dbReference type="AGR" id="FB:FBgn0038045"/>
<dbReference type="CTD" id="54187"/>
<dbReference type="FlyBase" id="FBgn0038045">
    <property type="gene designation" value="Nans"/>
</dbReference>
<dbReference type="VEuPathDB" id="VectorBase:FBgn0038045"/>
<dbReference type="eggNOG" id="ENOG502QR5J">
    <property type="taxonomic scope" value="Eukaryota"/>
</dbReference>
<dbReference type="GeneTree" id="ENSGT00390000011081"/>
<dbReference type="HOGENOM" id="CLU_040465_1_0_1"/>
<dbReference type="InParanoid" id="Q9VG74"/>
<dbReference type="OMA" id="MTYIDYR"/>
<dbReference type="OrthoDB" id="9928645at2759"/>
<dbReference type="PhylomeDB" id="Q9VG74"/>
<dbReference type="BRENDA" id="2.5.1.57">
    <property type="organism ID" value="1994"/>
</dbReference>
<dbReference type="Reactome" id="R-DME-4085001">
    <property type="pathway name" value="Sialic acid metabolism"/>
</dbReference>
<dbReference type="BioGRID-ORCS" id="41528">
    <property type="hits" value="0 hits in 1 CRISPR screen"/>
</dbReference>
<dbReference type="GenomeRNAi" id="41528"/>
<dbReference type="PRO" id="PR:Q9VG74"/>
<dbReference type="Proteomes" id="UP000000803">
    <property type="component" value="Chromosome 3R"/>
</dbReference>
<dbReference type="Bgee" id="FBgn0038045">
    <property type="expression patterns" value="Expressed in ensheathing neuropil associated glial cell (Drosophila) in brain and 4 other cell types or tissues"/>
</dbReference>
<dbReference type="GO" id="GO:0005829">
    <property type="term" value="C:cytosol"/>
    <property type="evidence" value="ECO:0000250"/>
    <property type="project" value="FlyBase"/>
</dbReference>
<dbReference type="GO" id="GO:0050462">
    <property type="term" value="F:N-acetylneuraminate synthase activity"/>
    <property type="evidence" value="ECO:0007669"/>
    <property type="project" value="UniProtKB-EC"/>
</dbReference>
<dbReference type="GO" id="GO:0047444">
    <property type="term" value="F:N-acylneuraminate-9-phosphate synthase activity"/>
    <property type="evidence" value="ECO:0000314"/>
    <property type="project" value="FlyBase"/>
</dbReference>
<dbReference type="GO" id="GO:0016051">
    <property type="term" value="P:carbohydrate biosynthetic process"/>
    <property type="evidence" value="ECO:0007669"/>
    <property type="project" value="InterPro"/>
</dbReference>
<dbReference type="GO" id="GO:0006055">
    <property type="term" value="P:CMP-N-acetylneuraminate biosynthetic process"/>
    <property type="evidence" value="ECO:0000250"/>
    <property type="project" value="FlyBase"/>
</dbReference>
<dbReference type="GO" id="GO:0070085">
    <property type="term" value="P:glycosylation"/>
    <property type="evidence" value="ECO:0000315"/>
    <property type="project" value="FlyBase"/>
</dbReference>
<dbReference type="GO" id="GO:0046380">
    <property type="term" value="P:N-acetylneuraminate biosynthetic process"/>
    <property type="evidence" value="ECO:0000314"/>
    <property type="project" value="FlyBase"/>
</dbReference>
<dbReference type="GO" id="GO:0006486">
    <property type="term" value="P:protein glycosylation"/>
    <property type="evidence" value="ECO:0000316"/>
    <property type="project" value="FlyBase"/>
</dbReference>
<dbReference type="CDD" id="cd11615">
    <property type="entry name" value="SAF_NeuB_like"/>
    <property type="match status" value="1"/>
</dbReference>
<dbReference type="FunFam" id="3.20.20.70:FF:000144">
    <property type="entry name" value="sialic acid synthase"/>
    <property type="match status" value="1"/>
</dbReference>
<dbReference type="Gene3D" id="3.20.20.70">
    <property type="entry name" value="Aldolase class I"/>
    <property type="match status" value="1"/>
</dbReference>
<dbReference type="Gene3D" id="3.90.1210.10">
    <property type="entry name" value="Antifreeze-like/N-acetylneuraminic acid synthase C-terminal domain"/>
    <property type="match status" value="1"/>
</dbReference>
<dbReference type="InterPro" id="IPR006190">
    <property type="entry name" value="AFP_Neu5c_C"/>
</dbReference>
<dbReference type="InterPro" id="IPR036732">
    <property type="entry name" value="AFP_Neu5c_C_sf"/>
</dbReference>
<dbReference type="InterPro" id="IPR013785">
    <property type="entry name" value="Aldolase_TIM"/>
</dbReference>
<dbReference type="InterPro" id="IPR013132">
    <property type="entry name" value="Neu5Ac_N"/>
</dbReference>
<dbReference type="InterPro" id="IPR051690">
    <property type="entry name" value="Nonulosonic_Acid_Synth"/>
</dbReference>
<dbReference type="InterPro" id="IPR013974">
    <property type="entry name" value="SAF"/>
</dbReference>
<dbReference type="PANTHER" id="PTHR42966">
    <property type="entry name" value="N-ACETYLNEURAMINATE SYNTHASE"/>
    <property type="match status" value="1"/>
</dbReference>
<dbReference type="PANTHER" id="PTHR42966:SF1">
    <property type="entry name" value="SIALIC ACID SYNTHASE"/>
    <property type="match status" value="1"/>
</dbReference>
<dbReference type="Pfam" id="PF03102">
    <property type="entry name" value="NeuB"/>
    <property type="match status" value="1"/>
</dbReference>
<dbReference type="Pfam" id="PF08666">
    <property type="entry name" value="SAF"/>
    <property type="match status" value="1"/>
</dbReference>
<dbReference type="SMART" id="SM00858">
    <property type="entry name" value="SAF"/>
    <property type="match status" value="1"/>
</dbReference>
<dbReference type="SUPFAM" id="SSF51269">
    <property type="entry name" value="AFP III-like domain"/>
    <property type="match status" value="1"/>
</dbReference>
<dbReference type="SUPFAM" id="SSF51569">
    <property type="entry name" value="Aldolase"/>
    <property type="match status" value="1"/>
</dbReference>
<dbReference type="PROSITE" id="PS50844">
    <property type="entry name" value="AFP_LIKE"/>
    <property type="match status" value="1"/>
</dbReference>
<sequence>MLLNDIISGKLVDSVYIIAEIGQNHQGCVETAKKMIWEAKKAGCHCVKFQKSDLPAKFTRSALDREYISDHAWGKTYGEHKEYLEFSKDQYLQLQAHCKELNVDFTASAMDERSLEFLSALNVPFIKIGSGDANNFPLLKKAANLNLPLVISTGMQTMQTVERIVQTMRESGKEDYALMHCVSSYPTDPKDCSLQLISVLRTRFPNVAIGYSGHELGVIISQAAVLLGARIVERHFTLDKSQKGSDHRCSLEPQELKALTTAITNFKLSSVPMPPQEIVKKLNGDEELEAALQHVESKTILPCELPCRNKLGKSIVAARNLNKGYRLQLADMAIKVSEPSGLTAEDFLDLVGKELADNIGEDEPILGNSIIN</sequence>
<gene>
    <name evidence="9" type="primary">Nans</name>
    <name evidence="4" type="synonym">Sas</name>
    <name evidence="9" type="ORF">CG5232</name>
</gene>
<comment type="function">
    <text evidence="2 3">Catalyzes the condensation of phosphoenolpyruvate (PEP) and N-acetylmannosamine 6-phosphate (ManNAc-6-P) or D-mannose 6-phosphate (Man-6-P) to generate the phosphorylated forms of both the sialic acids N-acetylneuraminic acid (Neu5Ac) and deaminoneuraminic acid (KDN), respectively (PubMed:11886840). Essential for biosynthesis of sialic acids in neurons of the central nervous system (PubMed:21919466).</text>
</comment>
<comment type="catalytic activity">
    <reaction evidence="2">
        <text>aldehydo-N-acetyl-D-mannosamine 6-phosphate + phosphoenolpyruvate + H2O = N-acetylneuraminate 9-phosphate + phosphate</text>
        <dbReference type="Rhea" id="RHEA:80835"/>
        <dbReference type="ChEBI" id="CHEBI:15377"/>
        <dbReference type="ChEBI" id="CHEBI:43474"/>
        <dbReference type="ChEBI" id="CHEBI:58557"/>
        <dbReference type="ChEBI" id="CHEBI:58702"/>
        <dbReference type="ChEBI" id="CHEBI:231734"/>
        <dbReference type="EC" id="2.5.1.57"/>
    </reaction>
    <physiologicalReaction direction="left-to-right" evidence="6">
        <dbReference type="Rhea" id="RHEA:80836"/>
    </physiologicalReaction>
</comment>
<comment type="catalytic activity">
    <reaction evidence="2">
        <text>aldehydo-D-mannose 6-phosphate + phosphoenolpyruvate + H2O = 3-deoxy-D-glycero-beta-D-galacto-non-2-ulopyranosonate 9-phosphate + phosphate</text>
        <dbReference type="Rhea" id="RHEA:49200"/>
        <dbReference type="ChEBI" id="CHEBI:15377"/>
        <dbReference type="ChEBI" id="CHEBI:43474"/>
        <dbReference type="ChEBI" id="CHEBI:58702"/>
        <dbReference type="ChEBI" id="CHEBI:90987"/>
        <dbReference type="ChEBI" id="CHEBI:231735"/>
        <dbReference type="EC" id="2.5.1.132"/>
    </reaction>
    <physiologicalReaction direction="left-to-right" evidence="6">
        <dbReference type="Rhea" id="RHEA:49201"/>
    </physiologicalReaction>
</comment>
<comment type="developmental stage">
    <text evidence="2">Expressed at all stages of development.</text>
</comment>
<comment type="caution">
    <text evidence="2">Does not exhibit sialic acid synthase activity, which catalyzes the synthesis of Neu5Ac and deaminoneuraminic acid (KDN) from N-acetylmannosamine (ManNAc) and mannose, respectively.</text>
</comment>
<comment type="sequence caution" evidence="5">
    <conflict type="erroneous initiation">
        <sequence resource="EMBL-CDS" id="ACD81783"/>
    </conflict>
    <text>Extended N-terminus.</text>
</comment>
<organism evidence="10">
    <name type="scientific">Drosophila melanogaster</name>
    <name type="common">Fruit fly</name>
    <dbReference type="NCBI Taxonomy" id="7227"/>
    <lineage>
        <taxon>Eukaryota</taxon>
        <taxon>Metazoa</taxon>
        <taxon>Ecdysozoa</taxon>
        <taxon>Arthropoda</taxon>
        <taxon>Hexapoda</taxon>
        <taxon>Insecta</taxon>
        <taxon>Pterygota</taxon>
        <taxon>Neoptera</taxon>
        <taxon>Endopterygota</taxon>
        <taxon>Diptera</taxon>
        <taxon>Brachycera</taxon>
        <taxon>Muscomorpha</taxon>
        <taxon>Ephydroidea</taxon>
        <taxon>Drosophilidae</taxon>
        <taxon>Drosophila</taxon>
        <taxon>Sophophora</taxon>
    </lineage>
</organism>
<reference evidence="7" key="1">
    <citation type="journal article" date="2002" name="Glycobiology">
        <title>Expression of a functional Drosophila melanogaster N-acetylneuraminic acid (Neu5Ac) phosphate synthase gene: evidence for endogenous sialic acid biosynthetic ability in insects.</title>
        <authorList>
            <person name="Kim K."/>
            <person name="Lawrence S.M."/>
            <person name="Park J."/>
            <person name="Pitts L."/>
            <person name="Vann W.F."/>
            <person name="Betenbaugh M.J."/>
            <person name="Palter K.B."/>
        </authorList>
    </citation>
    <scope>NUCLEOTIDE SEQUENCE [MRNA]</scope>
    <scope>FUNCTION</scope>
    <scope>CATALYTIC ACTIVITY</scope>
    <scope>DEVELOPMENTAL STAGE</scope>
    <source>
        <strain evidence="7">Oregon-R</strain>
    </source>
</reference>
<reference evidence="10" key="2">
    <citation type="journal article" date="2000" name="Science">
        <title>The genome sequence of Drosophila melanogaster.</title>
        <authorList>
            <person name="Adams M.D."/>
            <person name="Celniker S.E."/>
            <person name="Holt R.A."/>
            <person name="Evans C.A."/>
            <person name="Gocayne J.D."/>
            <person name="Amanatides P.G."/>
            <person name="Scherer S.E."/>
            <person name="Li P.W."/>
            <person name="Hoskins R.A."/>
            <person name="Galle R.F."/>
            <person name="George R.A."/>
            <person name="Lewis S.E."/>
            <person name="Richards S."/>
            <person name="Ashburner M."/>
            <person name="Henderson S.N."/>
            <person name="Sutton G.G."/>
            <person name="Wortman J.R."/>
            <person name="Yandell M.D."/>
            <person name="Zhang Q."/>
            <person name="Chen L.X."/>
            <person name="Brandon R.C."/>
            <person name="Rogers Y.-H.C."/>
            <person name="Blazej R.G."/>
            <person name="Champe M."/>
            <person name="Pfeiffer B.D."/>
            <person name="Wan K.H."/>
            <person name="Doyle C."/>
            <person name="Baxter E.G."/>
            <person name="Helt G."/>
            <person name="Nelson C.R."/>
            <person name="Miklos G.L.G."/>
            <person name="Abril J.F."/>
            <person name="Agbayani A."/>
            <person name="An H.-J."/>
            <person name="Andrews-Pfannkoch C."/>
            <person name="Baldwin D."/>
            <person name="Ballew R.M."/>
            <person name="Basu A."/>
            <person name="Baxendale J."/>
            <person name="Bayraktaroglu L."/>
            <person name="Beasley E.M."/>
            <person name="Beeson K.Y."/>
            <person name="Benos P.V."/>
            <person name="Berman B.P."/>
            <person name="Bhandari D."/>
            <person name="Bolshakov S."/>
            <person name="Borkova D."/>
            <person name="Botchan M.R."/>
            <person name="Bouck J."/>
            <person name="Brokstein P."/>
            <person name="Brottier P."/>
            <person name="Burtis K.C."/>
            <person name="Busam D.A."/>
            <person name="Butler H."/>
            <person name="Cadieu E."/>
            <person name="Center A."/>
            <person name="Chandra I."/>
            <person name="Cherry J.M."/>
            <person name="Cawley S."/>
            <person name="Dahlke C."/>
            <person name="Davenport L.B."/>
            <person name="Davies P."/>
            <person name="de Pablos B."/>
            <person name="Delcher A."/>
            <person name="Deng Z."/>
            <person name="Mays A.D."/>
            <person name="Dew I."/>
            <person name="Dietz S.M."/>
            <person name="Dodson K."/>
            <person name="Doup L.E."/>
            <person name="Downes M."/>
            <person name="Dugan-Rocha S."/>
            <person name="Dunkov B.C."/>
            <person name="Dunn P."/>
            <person name="Durbin K.J."/>
            <person name="Evangelista C.C."/>
            <person name="Ferraz C."/>
            <person name="Ferriera S."/>
            <person name="Fleischmann W."/>
            <person name="Fosler C."/>
            <person name="Gabrielian A.E."/>
            <person name="Garg N.S."/>
            <person name="Gelbart W.M."/>
            <person name="Glasser K."/>
            <person name="Glodek A."/>
            <person name="Gong F."/>
            <person name="Gorrell J.H."/>
            <person name="Gu Z."/>
            <person name="Guan P."/>
            <person name="Harris M."/>
            <person name="Harris N.L."/>
            <person name="Harvey D.A."/>
            <person name="Heiman T.J."/>
            <person name="Hernandez J.R."/>
            <person name="Houck J."/>
            <person name="Hostin D."/>
            <person name="Houston K.A."/>
            <person name="Howland T.J."/>
            <person name="Wei M.-H."/>
            <person name="Ibegwam C."/>
            <person name="Jalali M."/>
            <person name="Kalush F."/>
            <person name="Karpen G.H."/>
            <person name="Ke Z."/>
            <person name="Kennison J.A."/>
            <person name="Ketchum K.A."/>
            <person name="Kimmel B.E."/>
            <person name="Kodira C.D."/>
            <person name="Kraft C.L."/>
            <person name="Kravitz S."/>
            <person name="Kulp D."/>
            <person name="Lai Z."/>
            <person name="Lasko P."/>
            <person name="Lei Y."/>
            <person name="Levitsky A.A."/>
            <person name="Li J.H."/>
            <person name="Li Z."/>
            <person name="Liang Y."/>
            <person name="Lin X."/>
            <person name="Liu X."/>
            <person name="Mattei B."/>
            <person name="McIntosh T.C."/>
            <person name="McLeod M.P."/>
            <person name="McPherson D."/>
            <person name="Merkulov G."/>
            <person name="Milshina N.V."/>
            <person name="Mobarry C."/>
            <person name="Morris J."/>
            <person name="Moshrefi A."/>
            <person name="Mount S.M."/>
            <person name="Moy M."/>
            <person name="Murphy B."/>
            <person name="Murphy L."/>
            <person name="Muzny D.M."/>
            <person name="Nelson D.L."/>
            <person name="Nelson D.R."/>
            <person name="Nelson K.A."/>
            <person name="Nixon K."/>
            <person name="Nusskern D.R."/>
            <person name="Pacleb J.M."/>
            <person name="Palazzolo M."/>
            <person name="Pittman G.S."/>
            <person name="Pan S."/>
            <person name="Pollard J."/>
            <person name="Puri V."/>
            <person name="Reese M.G."/>
            <person name="Reinert K."/>
            <person name="Remington K."/>
            <person name="Saunders R.D.C."/>
            <person name="Scheeler F."/>
            <person name="Shen H."/>
            <person name="Shue B.C."/>
            <person name="Siden-Kiamos I."/>
            <person name="Simpson M."/>
            <person name="Skupski M.P."/>
            <person name="Smith T.J."/>
            <person name="Spier E."/>
            <person name="Spradling A.C."/>
            <person name="Stapleton M."/>
            <person name="Strong R."/>
            <person name="Sun E."/>
            <person name="Svirskas R."/>
            <person name="Tector C."/>
            <person name="Turner R."/>
            <person name="Venter E."/>
            <person name="Wang A.H."/>
            <person name="Wang X."/>
            <person name="Wang Z.-Y."/>
            <person name="Wassarman D.A."/>
            <person name="Weinstock G.M."/>
            <person name="Weissenbach J."/>
            <person name="Williams S.M."/>
            <person name="Woodage T."/>
            <person name="Worley K.C."/>
            <person name="Wu D."/>
            <person name="Yang S."/>
            <person name="Yao Q.A."/>
            <person name="Ye J."/>
            <person name="Yeh R.-F."/>
            <person name="Zaveri J.S."/>
            <person name="Zhan M."/>
            <person name="Zhang G."/>
            <person name="Zhao Q."/>
            <person name="Zheng L."/>
            <person name="Zheng X.H."/>
            <person name="Zhong F.N."/>
            <person name="Zhong W."/>
            <person name="Zhou X."/>
            <person name="Zhu S.C."/>
            <person name="Zhu X."/>
            <person name="Smith H.O."/>
            <person name="Gibbs R.A."/>
            <person name="Myers E.W."/>
            <person name="Rubin G.M."/>
            <person name="Venter J.C."/>
        </authorList>
    </citation>
    <scope>NUCLEOTIDE SEQUENCE [LARGE SCALE GENOMIC DNA]</scope>
    <source>
        <strain evidence="10">Berkeley</strain>
    </source>
</reference>
<reference evidence="10" key="3">
    <citation type="journal article" date="2002" name="Genome Biol.">
        <title>Annotation of the Drosophila melanogaster euchromatic genome: a systematic review.</title>
        <authorList>
            <person name="Misra S."/>
            <person name="Crosby M.A."/>
            <person name="Mungall C.J."/>
            <person name="Matthews B.B."/>
            <person name="Campbell K.S."/>
            <person name="Hradecky P."/>
            <person name="Huang Y."/>
            <person name="Kaminker J.S."/>
            <person name="Millburn G.H."/>
            <person name="Prochnik S.E."/>
            <person name="Smith C.D."/>
            <person name="Tupy J.L."/>
            <person name="Whitfield E.J."/>
            <person name="Bayraktaroglu L."/>
            <person name="Berman B.P."/>
            <person name="Bettencourt B.R."/>
            <person name="Celniker S.E."/>
            <person name="de Grey A.D.N.J."/>
            <person name="Drysdale R.A."/>
            <person name="Harris N.L."/>
            <person name="Richter J."/>
            <person name="Russo S."/>
            <person name="Schroeder A.J."/>
            <person name="Shu S.Q."/>
            <person name="Stapleton M."/>
            <person name="Yamada C."/>
            <person name="Ashburner M."/>
            <person name="Gelbart W.M."/>
            <person name="Rubin G.M."/>
            <person name="Lewis S.E."/>
        </authorList>
    </citation>
    <scope>GENOME REANNOTATION</scope>
    <source>
        <strain evidence="10">Berkeley</strain>
    </source>
</reference>
<reference evidence="8" key="4">
    <citation type="submission" date="2008-05" db="EMBL/GenBank/DDBJ databases">
        <authorList>
            <person name="Carlson J."/>
            <person name="Booth B."/>
            <person name="Frise E."/>
            <person name="Park S."/>
            <person name="Wan K."/>
            <person name="Yu C."/>
            <person name="Celniker S."/>
        </authorList>
    </citation>
    <scope>NUCLEOTIDE SEQUENCE [LARGE SCALE MRNA]</scope>
</reference>
<reference evidence="5" key="5">
    <citation type="journal article" date="2011" name="ACS Chem. Biol.">
        <title>DmSAS is required for sialic acid biosynthesis in cultured Drosophila third instar larvae CNS neurons.</title>
        <authorList>
            <person name="Granell A.E."/>
            <person name="Palter K.B."/>
            <person name="Akan I."/>
            <person name="Aich U."/>
            <person name="Yarema K.J."/>
            <person name="Betenbaugh M.J."/>
            <person name="Thornhill W.B."/>
            <person name="Recio-Pinto E."/>
        </authorList>
    </citation>
    <scope>FUNCTION</scope>
</reference>
<proteinExistence type="evidence at protein level"/>
<feature type="chain" id="PRO_0000438525" description="N-acetylneuraminate-9-phosphate synthase">
    <location>
        <begin position="1"/>
        <end position="372"/>
    </location>
</feature>
<feature type="domain" description="AFP-like" evidence="1">
    <location>
        <begin position="314"/>
        <end position="372"/>
    </location>
</feature>
<evidence type="ECO:0000255" key="1">
    <source>
        <dbReference type="PROSITE-ProRule" id="PRU00021"/>
    </source>
</evidence>
<evidence type="ECO:0000269" key="2">
    <source>
    </source>
</evidence>
<evidence type="ECO:0000269" key="3">
    <source>
    </source>
</evidence>
<evidence type="ECO:0000303" key="4">
    <source>
    </source>
</evidence>
<evidence type="ECO:0000305" key="5"/>
<evidence type="ECO:0000305" key="6">
    <source>
    </source>
</evidence>
<evidence type="ECO:0000312" key="7">
    <source>
        <dbReference type="EMBL" id="AAK92125.1"/>
    </source>
</evidence>
<evidence type="ECO:0000312" key="8">
    <source>
        <dbReference type="EMBL" id="ACD81783.1"/>
    </source>
</evidence>
<evidence type="ECO:0000312" key="9">
    <source>
        <dbReference type="FlyBase" id="FBgn0038045"/>
    </source>
</evidence>
<evidence type="ECO:0000312" key="10">
    <source>
        <dbReference type="Proteomes" id="UP000000803"/>
    </source>
</evidence>